<organism>
    <name type="scientific">Cellvibrio japonicus (strain Ueda107)</name>
    <name type="common">Pseudomonas fluorescens subsp. cellulosa</name>
    <dbReference type="NCBI Taxonomy" id="498211"/>
    <lineage>
        <taxon>Bacteria</taxon>
        <taxon>Pseudomonadati</taxon>
        <taxon>Pseudomonadota</taxon>
        <taxon>Gammaproteobacteria</taxon>
        <taxon>Cellvibrionales</taxon>
        <taxon>Cellvibrionaceae</taxon>
        <taxon>Cellvibrio</taxon>
    </lineage>
</organism>
<reference key="1">
    <citation type="journal article" date="2008" name="J. Bacteriol.">
        <title>Insights into plant cell wall degradation from the genome sequence of the soil bacterium Cellvibrio japonicus.</title>
        <authorList>
            <person name="DeBoy R.T."/>
            <person name="Mongodin E.F."/>
            <person name="Fouts D.E."/>
            <person name="Tailford L.E."/>
            <person name="Khouri H."/>
            <person name="Emerson J.B."/>
            <person name="Mohamoud Y."/>
            <person name="Watkins K."/>
            <person name="Henrissat B."/>
            <person name="Gilbert H.J."/>
            <person name="Nelson K.E."/>
        </authorList>
    </citation>
    <scope>NUCLEOTIDE SEQUENCE [LARGE SCALE GENOMIC DNA]</scope>
    <source>
        <strain>Ueda107</strain>
    </source>
</reference>
<accession>B3PG51</accession>
<protein>
    <recommendedName>
        <fullName evidence="2">Formamidopyrimidine-DNA glycosylase</fullName>
        <shortName evidence="2">Fapy-DNA glycosylase</shortName>
        <ecNumber evidence="2">3.2.2.23</ecNumber>
    </recommendedName>
    <alternativeName>
        <fullName evidence="2">DNA-(apurinic or apyrimidinic site) lyase MutM</fullName>
        <shortName evidence="2">AP lyase MutM</shortName>
        <ecNumber evidence="2">4.2.99.18</ecNumber>
    </alternativeName>
</protein>
<sequence>MPELPEVETTLRGVSPHILGRKVTDLVIRQPRLRWPIPLELSEQLPGQQLKAASRRGKYLLLSFNTGTALIHLGMSGSLRIVKPEEPPLFHDHFDMHFGNRILRYCDPRRFGCLLWEAGDIHQHALLRDLGPEPLGDDFTPAYLYERSRKRTQAIKQFIMDSKIVVGVGNIYANESLFMAGIKPIRKAGALSRHMCEDLVRDIRFVLQRSITQGGTTLRDFVGGDGKPGYFQQQLLVYGRGGEACKTCQKPLKEIRMNDRTTVYCVTCQQ</sequence>
<dbReference type="EC" id="3.2.2.23" evidence="2"/>
<dbReference type="EC" id="4.2.99.18" evidence="2"/>
<dbReference type="EMBL" id="CP000934">
    <property type="protein sequence ID" value="ACE84778.1"/>
    <property type="molecule type" value="Genomic_DNA"/>
</dbReference>
<dbReference type="RefSeq" id="WP_012489080.1">
    <property type="nucleotide sequence ID" value="NC_010995.1"/>
</dbReference>
<dbReference type="SMR" id="B3PG51"/>
<dbReference type="STRING" id="498211.CJA_3505"/>
<dbReference type="KEGG" id="cja:CJA_3505"/>
<dbReference type="eggNOG" id="COG0266">
    <property type="taxonomic scope" value="Bacteria"/>
</dbReference>
<dbReference type="HOGENOM" id="CLU_038423_1_1_6"/>
<dbReference type="OrthoDB" id="9800855at2"/>
<dbReference type="Proteomes" id="UP000001036">
    <property type="component" value="Chromosome"/>
</dbReference>
<dbReference type="GO" id="GO:0034039">
    <property type="term" value="F:8-oxo-7,8-dihydroguanine DNA N-glycosylase activity"/>
    <property type="evidence" value="ECO:0007669"/>
    <property type="project" value="TreeGrafter"/>
</dbReference>
<dbReference type="GO" id="GO:0140078">
    <property type="term" value="F:class I DNA-(apurinic or apyrimidinic site) endonuclease activity"/>
    <property type="evidence" value="ECO:0007669"/>
    <property type="project" value="UniProtKB-EC"/>
</dbReference>
<dbReference type="GO" id="GO:0003684">
    <property type="term" value="F:damaged DNA binding"/>
    <property type="evidence" value="ECO:0007669"/>
    <property type="project" value="InterPro"/>
</dbReference>
<dbReference type="GO" id="GO:0008270">
    <property type="term" value="F:zinc ion binding"/>
    <property type="evidence" value="ECO:0007669"/>
    <property type="project" value="UniProtKB-UniRule"/>
</dbReference>
<dbReference type="GO" id="GO:0006284">
    <property type="term" value="P:base-excision repair"/>
    <property type="evidence" value="ECO:0007669"/>
    <property type="project" value="InterPro"/>
</dbReference>
<dbReference type="CDD" id="cd08966">
    <property type="entry name" value="EcFpg-like_N"/>
    <property type="match status" value="1"/>
</dbReference>
<dbReference type="FunFam" id="1.10.8.50:FF:000003">
    <property type="entry name" value="Formamidopyrimidine-DNA glycosylase"/>
    <property type="match status" value="1"/>
</dbReference>
<dbReference type="FunFam" id="3.20.190.10:FF:000001">
    <property type="entry name" value="Formamidopyrimidine-DNA glycosylase"/>
    <property type="match status" value="1"/>
</dbReference>
<dbReference type="Gene3D" id="1.10.8.50">
    <property type="match status" value="1"/>
</dbReference>
<dbReference type="Gene3D" id="3.20.190.10">
    <property type="entry name" value="MutM-like, N-terminal"/>
    <property type="match status" value="1"/>
</dbReference>
<dbReference type="HAMAP" id="MF_00103">
    <property type="entry name" value="Fapy_DNA_glycosyl"/>
    <property type="match status" value="1"/>
</dbReference>
<dbReference type="InterPro" id="IPR015886">
    <property type="entry name" value="DNA_glyclase/AP_lyase_DNA-bd"/>
</dbReference>
<dbReference type="InterPro" id="IPR020629">
    <property type="entry name" value="Formamido-pyr_DNA_Glyclase"/>
</dbReference>
<dbReference type="InterPro" id="IPR012319">
    <property type="entry name" value="FPG_cat"/>
</dbReference>
<dbReference type="InterPro" id="IPR035937">
    <property type="entry name" value="MutM-like_N-ter"/>
</dbReference>
<dbReference type="InterPro" id="IPR010979">
    <property type="entry name" value="Ribosomal_uS13-like_H2TH"/>
</dbReference>
<dbReference type="InterPro" id="IPR000214">
    <property type="entry name" value="Znf_DNA_glyclase/AP_lyase"/>
</dbReference>
<dbReference type="NCBIfam" id="TIGR00577">
    <property type="entry name" value="fpg"/>
    <property type="match status" value="1"/>
</dbReference>
<dbReference type="NCBIfam" id="NF002211">
    <property type="entry name" value="PRK01103.1"/>
    <property type="match status" value="1"/>
</dbReference>
<dbReference type="PANTHER" id="PTHR22993">
    <property type="entry name" value="FORMAMIDOPYRIMIDINE-DNA GLYCOSYLASE"/>
    <property type="match status" value="1"/>
</dbReference>
<dbReference type="PANTHER" id="PTHR22993:SF9">
    <property type="entry name" value="FORMAMIDOPYRIMIDINE-DNA GLYCOSYLASE"/>
    <property type="match status" value="1"/>
</dbReference>
<dbReference type="Pfam" id="PF01149">
    <property type="entry name" value="Fapy_DNA_glyco"/>
    <property type="match status" value="1"/>
</dbReference>
<dbReference type="Pfam" id="PF06831">
    <property type="entry name" value="H2TH"/>
    <property type="match status" value="1"/>
</dbReference>
<dbReference type="SMART" id="SM00898">
    <property type="entry name" value="Fapy_DNA_glyco"/>
    <property type="match status" value="1"/>
</dbReference>
<dbReference type="SMART" id="SM01232">
    <property type="entry name" value="H2TH"/>
    <property type="match status" value="1"/>
</dbReference>
<dbReference type="SUPFAM" id="SSF57716">
    <property type="entry name" value="Glucocorticoid receptor-like (DNA-binding domain)"/>
    <property type="match status" value="1"/>
</dbReference>
<dbReference type="SUPFAM" id="SSF81624">
    <property type="entry name" value="N-terminal domain of MutM-like DNA repair proteins"/>
    <property type="match status" value="1"/>
</dbReference>
<dbReference type="SUPFAM" id="SSF46946">
    <property type="entry name" value="S13-like H2TH domain"/>
    <property type="match status" value="1"/>
</dbReference>
<dbReference type="PROSITE" id="PS51068">
    <property type="entry name" value="FPG_CAT"/>
    <property type="match status" value="1"/>
</dbReference>
<dbReference type="PROSITE" id="PS51066">
    <property type="entry name" value="ZF_FPG_2"/>
    <property type="match status" value="1"/>
</dbReference>
<comment type="function">
    <text evidence="2">Involved in base excision repair of DNA damaged by oxidation or by mutagenic agents. Acts as a DNA glycosylase that recognizes and removes damaged bases. Has a preference for oxidized purines, such as 7,8-dihydro-8-oxoguanine (8-oxoG). Has AP (apurinic/apyrimidinic) lyase activity and introduces nicks in the DNA strand. Cleaves the DNA backbone by beta-delta elimination to generate a single-strand break at the site of the removed base with both 3'- and 5'-phosphates.</text>
</comment>
<comment type="catalytic activity">
    <reaction evidence="2">
        <text>Hydrolysis of DNA containing ring-opened 7-methylguanine residues, releasing 2,6-diamino-4-hydroxy-5-(N-methyl)formamidopyrimidine.</text>
        <dbReference type="EC" id="3.2.2.23"/>
    </reaction>
</comment>
<comment type="catalytic activity">
    <reaction evidence="2">
        <text>2'-deoxyribonucleotide-(2'-deoxyribose 5'-phosphate)-2'-deoxyribonucleotide-DNA = a 3'-end 2'-deoxyribonucleotide-(2,3-dehydro-2,3-deoxyribose 5'-phosphate)-DNA + a 5'-end 5'-phospho-2'-deoxyribonucleoside-DNA + H(+)</text>
        <dbReference type="Rhea" id="RHEA:66592"/>
        <dbReference type="Rhea" id="RHEA-COMP:13180"/>
        <dbReference type="Rhea" id="RHEA-COMP:16897"/>
        <dbReference type="Rhea" id="RHEA-COMP:17067"/>
        <dbReference type="ChEBI" id="CHEBI:15378"/>
        <dbReference type="ChEBI" id="CHEBI:136412"/>
        <dbReference type="ChEBI" id="CHEBI:157695"/>
        <dbReference type="ChEBI" id="CHEBI:167181"/>
        <dbReference type="EC" id="4.2.99.18"/>
    </reaction>
</comment>
<comment type="cofactor">
    <cofactor evidence="2">
        <name>Zn(2+)</name>
        <dbReference type="ChEBI" id="CHEBI:29105"/>
    </cofactor>
    <text evidence="2">Binds 1 zinc ion per subunit.</text>
</comment>
<comment type="subunit">
    <text evidence="2">Monomer.</text>
</comment>
<comment type="similarity">
    <text evidence="2">Belongs to the FPG family.</text>
</comment>
<feature type="initiator methionine" description="Removed" evidence="1">
    <location>
        <position position="1"/>
    </location>
</feature>
<feature type="chain" id="PRO_1000094038" description="Formamidopyrimidine-DNA glycosylase">
    <location>
        <begin position="2"/>
        <end position="270"/>
    </location>
</feature>
<feature type="zinc finger region" description="FPG-type" evidence="2">
    <location>
        <begin position="236"/>
        <end position="270"/>
    </location>
</feature>
<feature type="active site" description="Schiff-base intermediate with DNA" evidence="2">
    <location>
        <position position="2"/>
    </location>
</feature>
<feature type="active site" description="Proton donor" evidence="2">
    <location>
        <position position="3"/>
    </location>
</feature>
<feature type="active site" description="Proton donor; for beta-elimination activity" evidence="2">
    <location>
        <position position="58"/>
    </location>
</feature>
<feature type="active site" description="Proton donor; for delta-elimination activity" evidence="2">
    <location>
        <position position="260"/>
    </location>
</feature>
<feature type="binding site" evidence="2">
    <location>
        <position position="91"/>
    </location>
    <ligand>
        <name>DNA</name>
        <dbReference type="ChEBI" id="CHEBI:16991"/>
    </ligand>
</feature>
<feature type="binding site" evidence="2">
    <location>
        <position position="109"/>
    </location>
    <ligand>
        <name>DNA</name>
        <dbReference type="ChEBI" id="CHEBI:16991"/>
    </ligand>
</feature>
<feature type="binding site" evidence="2">
    <location>
        <position position="151"/>
    </location>
    <ligand>
        <name>DNA</name>
        <dbReference type="ChEBI" id="CHEBI:16991"/>
    </ligand>
</feature>
<gene>
    <name evidence="2" type="primary">mutM</name>
    <name evidence="2" type="synonym">fpg</name>
    <name type="ordered locus">CJA_3505</name>
</gene>
<name>FPG_CELJU</name>
<proteinExistence type="inferred from homology"/>
<keyword id="KW-0227">DNA damage</keyword>
<keyword id="KW-0234">DNA repair</keyword>
<keyword id="KW-0238">DNA-binding</keyword>
<keyword id="KW-0326">Glycosidase</keyword>
<keyword id="KW-0378">Hydrolase</keyword>
<keyword id="KW-0456">Lyase</keyword>
<keyword id="KW-0479">Metal-binding</keyword>
<keyword id="KW-0511">Multifunctional enzyme</keyword>
<keyword id="KW-1185">Reference proteome</keyword>
<keyword id="KW-0862">Zinc</keyword>
<keyword id="KW-0863">Zinc-finger</keyword>
<evidence type="ECO:0000250" key="1"/>
<evidence type="ECO:0000255" key="2">
    <source>
        <dbReference type="HAMAP-Rule" id="MF_00103"/>
    </source>
</evidence>